<evidence type="ECO:0000250" key="1">
    <source>
        <dbReference type="UniProtKB" id="P0ACT4"/>
    </source>
</evidence>
<evidence type="ECO:0000255" key="2">
    <source>
        <dbReference type="PROSITE-ProRule" id="PRU00335"/>
    </source>
</evidence>
<geneLocation type="plasmid">
    <name>pSP9351</name>
</geneLocation>
<comment type="function">
    <text>TetR is the repressor of the tetracycline resistance element; its N-terminal region forms a helix-turn-helix structure and binds DNA. Binding of tetracycline to TetR reduces the repressor affinity for the tetracycline resistance gene (tetA) promoter operator sites.</text>
</comment>
<comment type="induction">
    <text>By the [Mg-tetracycline]+ complex.</text>
</comment>
<name>TETR8_PHODP</name>
<organism>
    <name type="scientific">Photobacterium damsela subsp. piscicida</name>
    <name type="common">Pasteurella piscicida</name>
    <dbReference type="NCBI Taxonomy" id="38294"/>
    <lineage>
        <taxon>Bacteria</taxon>
        <taxon>Pseudomonadati</taxon>
        <taxon>Pseudomonadota</taxon>
        <taxon>Gammaproteobacteria</taxon>
        <taxon>Vibrionales</taxon>
        <taxon>Vibrionaceae</taxon>
        <taxon>Photobacterium</taxon>
    </lineage>
</organism>
<accession>P51562</accession>
<reference key="1">
    <citation type="journal article" date="1994" name="Microbiol. Immunol.">
        <title>The transposon-like structure of IS26-tetracycline, and kanamycin resistance determinant derived from transferable R plasmid of fish pathogen, Pasteurella piscicida.</title>
        <authorList>
            <person name="Kim E.H."/>
            <person name="Aoki T."/>
        </authorList>
    </citation>
    <scope>NUCLEOTIDE SEQUENCE [GENOMIC DNA]</scope>
</reference>
<sequence length="218" mass="24419">MARLNRESVIDAALELLNETGIDGLTTRKLAQKLGIEQPTLYWHVKNKRALLDALAVEILARHHDYSLPAAGESWQSFLRNNAMSFRRALLRYRDGAKVHLGTRPDEKQYDTVETQLRFMTENGFSLRDGLYAISAVSHFTLGAVLEQQEHTAALTDRPAAPDENLPPLLREALQIMDSDDGEQAFLHGLESLIRGFEVQLTALLQIVGGDKLIIPFC</sequence>
<dbReference type="EMBL" id="D16172">
    <property type="protein sequence ID" value="BAA03720.1"/>
    <property type="molecule type" value="Genomic_DNA"/>
</dbReference>
<dbReference type="RefSeq" id="YP_003023971.1">
    <property type="nucleotide sequence ID" value="NC_012919.1"/>
</dbReference>
<dbReference type="RefSeq" id="YP_908416.1">
    <property type="nucleotide sequence ID" value="NC_008612.1"/>
</dbReference>
<dbReference type="RefSeq" id="YP_908600.1">
    <property type="nucleotide sequence ID" value="NC_008613.1"/>
</dbReference>
<dbReference type="SMR" id="P51562"/>
<dbReference type="GO" id="GO:0003700">
    <property type="term" value="F:DNA-binding transcription factor activity"/>
    <property type="evidence" value="ECO:0007669"/>
    <property type="project" value="TreeGrafter"/>
</dbReference>
<dbReference type="GO" id="GO:0046872">
    <property type="term" value="F:metal ion binding"/>
    <property type="evidence" value="ECO:0007669"/>
    <property type="project" value="UniProtKB-KW"/>
</dbReference>
<dbReference type="GO" id="GO:0000976">
    <property type="term" value="F:transcription cis-regulatory region binding"/>
    <property type="evidence" value="ECO:0007669"/>
    <property type="project" value="TreeGrafter"/>
</dbReference>
<dbReference type="GO" id="GO:0045892">
    <property type="term" value="P:negative regulation of DNA-templated transcription"/>
    <property type="evidence" value="ECO:0007669"/>
    <property type="project" value="InterPro"/>
</dbReference>
<dbReference type="GO" id="GO:0046677">
    <property type="term" value="P:response to antibiotic"/>
    <property type="evidence" value="ECO:0007669"/>
    <property type="project" value="UniProtKB-KW"/>
</dbReference>
<dbReference type="Gene3D" id="1.10.10.60">
    <property type="entry name" value="Homeodomain-like"/>
    <property type="match status" value="1"/>
</dbReference>
<dbReference type="Gene3D" id="1.10.357.10">
    <property type="entry name" value="Tetracycline Repressor, domain 2"/>
    <property type="match status" value="1"/>
</dbReference>
<dbReference type="InterPro" id="IPR023772">
    <property type="entry name" value="DNA-bd_HTH_TetR-type_CS"/>
</dbReference>
<dbReference type="InterPro" id="IPR009057">
    <property type="entry name" value="Homeodomain-like_sf"/>
</dbReference>
<dbReference type="InterPro" id="IPR050109">
    <property type="entry name" value="HTH-type_TetR-like_transc_reg"/>
</dbReference>
<dbReference type="InterPro" id="IPR001647">
    <property type="entry name" value="HTH_TetR"/>
</dbReference>
<dbReference type="InterPro" id="IPR004111">
    <property type="entry name" value="Repressor_TetR_C"/>
</dbReference>
<dbReference type="InterPro" id="IPR003012">
    <property type="entry name" value="Tet_transcr_reg_TetR"/>
</dbReference>
<dbReference type="InterPro" id="IPR036271">
    <property type="entry name" value="Tet_transcr_reg_TetR-rel_C_sf"/>
</dbReference>
<dbReference type="NCBIfam" id="NF010319">
    <property type="entry name" value="PRK13756.1"/>
    <property type="match status" value="1"/>
</dbReference>
<dbReference type="PANTHER" id="PTHR30055">
    <property type="entry name" value="HTH-TYPE TRANSCRIPTIONAL REGULATOR RUTR"/>
    <property type="match status" value="1"/>
</dbReference>
<dbReference type="PANTHER" id="PTHR30055:SF151">
    <property type="entry name" value="TRANSCRIPTIONAL REGULATORY PROTEIN"/>
    <property type="match status" value="1"/>
</dbReference>
<dbReference type="Pfam" id="PF02909">
    <property type="entry name" value="TetR_C_1"/>
    <property type="match status" value="1"/>
</dbReference>
<dbReference type="Pfam" id="PF00440">
    <property type="entry name" value="TetR_N"/>
    <property type="match status" value="1"/>
</dbReference>
<dbReference type="PRINTS" id="PR00455">
    <property type="entry name" value="HTHTETR"/>
</dbReference>
<dbReference type="PRINTS" id="PR00400">
    <property type="entry name" value="TETREPRESSOR"/>
</dbReference>
<dbReference type="SUPFAM" id="SSF46689">
    <property type="entry name" value="Homeodomain-like"/>
    <property type="match status" value="1"/>
</dbReference>
<dbReference type="SUPFAM" id="SSF48498">
    <property type="entry name" value="Tetracyclin repressor-like, C-terminal domain"/>
    <property type="match status" value="1"/>
</dbReference>
<dbReference type="PROSITE" id="PS01081">
    <property type="entry name" value="HTH_TETR_1"/>
    <property type="match status" value="1"/>
</dbReference>
<dbReference type="PROSITE" id="PS50977">
    <property type="entry name" value="HTH_TETR_2"/>
    <property type="match status" value="1"/>
</dbReference>
<keyword id="KW-0046">Antibiotic resistance</keyword>
<keyword id="KW-0238">DNA-binding</keyword>
<keyword id="KW-0460">Magnesium</keyword>
<keyword id="KW-0479">Metal-binding</keyword>
<keyword id="KW-0614">Plasmid</keyword>
<keyword id="KW-0678">Repressor</keyword>
<keyword id="KW-0804">Transcription</keyword>
<keyword id="KW-0805">Transcription regulation</keyword>
<protein>
    <recommendedName>
        <fullName>Tetracycline repressor protein class H</fullName>
    </recommendedName>
</protein>
<gene>
    <name type="primary">tetR</name>
</gene>
<proteinExistence type="evidence at transcript level"/>
<feature type="chain" id="PRO_0000070620" description="Tetracycline repressor protein class H">
    <location>
        <begin position="1"/>
        <end position="218"/>
    </location>
</feature>
<feature type="domain" description="HTH tetR-type" evidence="2">
    <location>
        <begin position="3"/>
        <end position="63"/>
    </location>
</feature>
<feature type="DNA-binding region" description="H-T-H motif" evidence="2">
    <location>
        <begin position="26"/>
        <end position="45"/>
    </location>
</feature>
<feature type="binding site" evidence="1">
    <location>
        <position position="64"/>
    </location>
    <ligand>
        <name>tetracycline</name>
        <dbReference type="ChEBI" id="CHEBI:77932"/>
    </ligand>
</feature>
<feature type="binding site" evidence="1">
    <location>
        <position position="82"/>
    </location>
    <ligand>
        <name>tetracycline</name>
        <dbReference type="ChEBI" id="CHEBI:77932"/>
    </ligand>
</feature>
<feature type="binding site" evidence="1">
    <location>
        <position position="100"/>
    </location>
    <ligand>
        <name>Mg(2+)</name>
        <dbReference type="ChEBI" id="CHEBI:18420"/>
    </ligand>
</feature>